<feature type="signal peptide" evidence="2">
    <location>
        <begin position="1"/>
        <end position="15"/>
    </location>
</feature>
<feature type="propeptide" id="PRO_0000026281" description="Activation peptide">
    <location>
        <begin position="16"/>
        <end position="113"/>
    </location>
</feature>
<feature type="chain" id="PRO_0000026282" description="Cathepsin M">
    <location>
        <begin position="114"/>
        <end position="333"/>
    </location>
</feature>
<feature type="active site" evidence="3">
    <location>
        <position position="138"/>
    </location>
</feature>
<feature type="active site" evidence="3">
    <location>
        <position position="276"/>
    </location>
</feature>
<feature type="active site" evidence="3">
    <location>
        <position position="300"/>
    </location>
</feature>
<feature type="glycosylation site" description="N-linked (GlcNAc...) asparagine" evidence="2">
    <location>
        <position position="217"/>
    </location>
</feature>
<feature type="glycosylation site" description="N-linked (GlcNAc...) asparagine" evidence="2">
    <location>
        <position position="221"/>
    </location>
</feature>
<feature type="glycosylation site" description="N-linked (GlcNAc...) asparagine" evidence="2">
    <location>
        <position position="268"/>
    </location>
</feature>
<feature type="disulfide bond" evidence="1">
    <location>
        <begin position="135"/>
        <end position="178"/>
    </location>
</feature>
<feature type="disulfide bond" evidence="1">
    <location>
        <begin position="169"/>
        <end position="211"/>
    </location>
</feature>
<feature type="disulfide bond" evidence="1">
    <location>
        <begin position="269"/>
        <end position="322"/>
    </location>
</feature>
<feature type="sequence variant" evidence="4">
    <original>C</original>
    <variation>S</variation>
    <location>
        <position position="272"/>
    </location>
</feature>
<feature type="sequence conflict" description="In Ref. 2; AAL15416." evidence="5" ref="2">
    <original>D</original>
    <variation>E</variation>
    <location>
        <position position="54"/>
    </location>
</feature>
<feature type="sequence conflict" description="In Ref. 2; AAL15416." evidence="5" ref="2">
    <original>Q</original>
    <variation>R</variation>
    <location>
        <position position="130"/>
    </location>
</feature>
<feature type="sequence conflict" description="In Ref. 2; AAL15416." evidence="5" ref="2">
    <original>Q</original>
    <variation>P</variation>
    <location>
        <position position="157"/>
    </location>
</feature>
<feature type="sequence conflict" description="In Ref. 2; AAL15416." evidence="5" ref="2">
    <original>D</original>
    <variation>E</variation>
    <location>
        <position position="208"/>
    </location>
</feature>
<feature type="sequence conflict" description="In Ref. 2; AAL15416." evidence="5" ref="2">
    <original>T</original>
    <variation>A</variation>
    <location>
        <position position="286"/>
    </location>
</feature>
<dbReference type="EC" id="3.4.22.-"/>
<dbReference type="EMBL" id="AF202528">
    <property type="protein sequence ID" value="AAF68224.1"/>
    <property type="molecule type" value="mRNA"/>
</dbReference>
<dbReference type="EMBL" id="AY014777">
    <property type="protein sequence ID" value="AAK00506.1"/>
    <property type="molecule type" value="mRNA"/>
</dbReference>
<dbReference type="EMBL" id="AY057446">
    <property type="protein sequence ID" value="AAL15416.1"/>
    <property type="molecule type" value="Genomic_DNA"/>
</dbReference>
<dbReference type="EMBL" id="AK005550">
    <property type="protein sequence ID" value="BAB24116.1"/>
    <property type="molecule type" value="mRNA"/>
</dbReference>
<dbReference type="EMBL" id="AK005428">
    <property type="protein sequence ID" value="BAB24022.1"/>
    <property type="molecule type" value="mRNA"/>
</dbReference>
<dbReference type="CCDS" id="CCDS36694.1"/>
<dbReference type="RefSeq" id="NP_071721.2">
    <property type="nucleotide sequence ID" value="NM_022326.3"/>
</dbReference>
<dbReference type="RefSeq" id="XP_006517372.1">
    <property type="nucleotide sequence ID" value="XM_006517309.3"/>
</dbReference>
<dbReference type="RefSeq" id="XP_011242849.1">
    <property type="nucleotide sequence ID" value="XM_011244547.2"/>
</dbReference>
<dbReference type="SMR" id="Q9JL96"/>
<dbReference type="FunCoup" id="Q9JL96">
    <property type="interactions" value="179"/>
</dbReference>
<dbReference type="STRING" id="10090.ENSMUSP00000153101"/>
<dbReference type="MEROPS" id="C01.023"/>
<dbReference type="GlyCosmos" id="Q9JL96">
    <property type="glycosylation" value="3 sites, No reported glycans"/>
</dbReference>
<dbReference type="GlyGen" id="Q9JL96">
    <property type="glycosylation" value="4 sites"/>
</dbReference>
<dbReference type="PaxDb" id="10090-ENSMUSP00000097050"/>
<dbReference type="DNASU" id="64139"/>
<dbReference type="GeneID" id="64139"/>
<dbReference type="KEGG" id="mmu:64139"/>
<dbReference type="UCSC" id="uc007qwj.1">
    <property type="organism name" value="mouse"/>
</dbReference>
<dbReference type="AGR" id="MGI:1927229"/>
<dbReference type="CTD" id="64139"/>
<dbReference type="MGI" id="MGI:1927229">
    <property type="gene designation" value="Ctsm"/>
</dbReference>
<dbReference type="eggNOG" id="KOG1543">
    <property type="taxonomic scope" value="Eukaryota"/>
</dbReference>
<dbReference type="InParanoid" id="Q9JL96"/>
<dbReference type="OrthoDB" id="10253408at2759"/>
<dbReference type="PhylomeDB" id="Q9JL96"/>
<dbReference type="TreeFam" id="TF313739"/>
<dbReference type="BioGRID-ORCS" id="64139">
    <property type="hits" value="1 hit in 75 CRISPR screens"/>
</dbReference>
<dbReference type="PRO" id="PR:Q9JL96"/>
<dbReference type="Proteomes" id="UP000000589">
    <property type="component" value="Unplaced"/>
</dbReference>
<dbReference type="RNAct" id="Q9JL96">
    <property type="molecule type" value="protein"/>
</dbReference>
<dbReference type="GO" id="GO:0005764">
    <property type="term" value="C:lysosome"/>
    <property type="evidence" value="ECO:0007669"/>
    <property type="project" value="UniProtKB-SubCell"/>
</dbReference>
<dbReference type="GO" id="GO:0008234">
    <property type="term" value="F:cysteine-type peptidase activity"/>
    <property type="evidence" value="ECO:0000250"/>
    <property type="project" value="MGI"/>
</dbReference>
<dbReference type="GO" id="GO:0006508">
    <property type="term" value="P:proteolysis"/>
    <property type="evidence" value="ECO:0007669"/>
    <property type="project" value="UniProtKB-KW"/>
</dbReference>
<dbReference type="CDD" id="cd02248">
    <property type="entry name" value="Peptidase_C1A"/>
    <property type="match status" value="1"/>
</dbReference>
<dbReference type="FunFam" id="3.90.70.10:FF:000332">
    <property type="entry name" value="Cathepsin L1"/>
    <property type="match status" value="1"/>
</dbReference>
<dbReference type="Gene3D" id="3.90.70.10">
    <property type="entry name" value="Cysteine proteinases"/>
    <property type="match status" value="1"/>
</dbReference>
<dbReference type="InterPro" id="IPR038765">
    <property type="entry name" value="Papain-like_cys_pep_sf"/>
</dbReference>
<dbReference type="InterPro" id="IPR025660">
    <property type="entry name" value="Pept_his_AS"/>
</dbReference>
<dbReference type="InterPro" id="IPR013128">
    <property type="entry name" value="Peptidase_C1A"/>
</dbReference>
<dbReference type="InterPro" id="IPR000668">
    <property type="entry name" value="Peptidase_C1A_C"/>
</dbReference>
<dbReference type="InterPro" id="IPR039417">
    <property type="entry name" value="Peptidase_C1A_papain-like"/>
</dbReference>
<dbReference type="InterPro" id="IPR013201">
    <property type="entry name" value="Prot_inhib_I29"/>
</dbReference>
<dbReference type="PANTHER" id="PTHR12411">
    <property type="entry name" value="CYSTEINE PROTEASE FAMILY C1-RELATED"/>
    <property type="match status" value="1"/>
</dbReference>
<dbReference type="Pfam" id="PF08246">
    <property type="entry name" value="Inhibitor_I29"/>
    <property type="match status" value="1"/>
</dbReference>
<dbReference type="Pfam" id="PF00112">
    <property type="entry name" value="Peptidase_C1"/>
    <property type="match status" value="1"/>
</dbReference>
<dbReference type="PRINTS" id="PR00705">
    <property type="entry name" value="PAPAIN"/>
</dbReference>
<dbReference type="SMART" id="SM00848">
    <property type="entry name" value="Inhibitor_I29"/>
    <property type="match status" value="1"/>
</dbReference>
<dbReference type="SMART" id="SM00645">
    <property type="entry name" value="Pept_C1"/>
    <property type="match status" value="1"/>
</dbReference>
<dbReference type="SUPFAM" id="SSF54001">
    <property type="entry name" value="Cysteine proteinases"/>
    <property type="match status" value="1"/>
</dbReference>
<dbReference type="PROSITE" id="PS00639">
    <property type="entry name" value="THIOL_PROTEASE_HIS"/>
    <property type="match status" value="1"/>
</dbReference>
<comment type="subcellular location">
    <subcellularLocation>
        <location evidence="5">Lysosome</location>
    </subcellularLocation>
</comment>
<comment type="tissue specificity">
    <text evidence="4">Placenta.</text>
</comment>
<comment type="developmental stage">
    <text evidence="4">Expressed in adult but not in embryo.</text>
</comment>
<comment type="similarity">
    <text evidence="3">Belongs to the peptidase C1 family.</text>
</comment>
<organism>
    <name type="scientific">Mus musculus</name>
    <name type="common">Mouse</name>
    <dbReference type="NCBI Taxonomy" id="10090"/>
    <lineage>
        <taxon>Eukaryota</taxon>
        <taxon>Metazoa</taxon>
        <taxon>Chordata</taxon>
        <taxon>Craniata</taxon>
        <taxon>Vertebrata</taxon>
        <taxon>Euteleostomi</taxon>
        <taxon>Mammalia</taxon>
        <taxon>Eutheria</taxon>
        <taxon>Euarchontoglires</taxon>
        <taxon>Glires</taxon>
        <taxon>Rodentia</taxon>
        <taxon>Myomorpha</taxon>
        <taxon>Muroidea</taxon>
        <taxon>Muridae</taxon>
        <taxon>Murinae</taxon>
        <taxon>Mus</taxon>
        <taxon>Mus</taxon>
    </lineage>
</organism>
<evidence type="ECO:0000250" key="1"/>
<evidence type="ECO:0000255" key="2"/>
<evidence type="ECO:0000255" key="3">
    <source>
        <dbReference type="PROSITE-ProRule" id="PRU10089"/>
    </source>
</evidence>
<evidence type="ECO:0000269" key="4">
    <source>
    </source>
</evidence>
<evidence type="ECO:0000305" key="5"/>
<reference key="1">
    <citation type="journal article" date="2000" name="Biochim. Biophys. Acta">
        <title>Mouse cathepsin M, a placenta-specific lysosomal cysteine protease related to cathepsins L and P.</title>
        <authorList>
            <person name="Sol-Church K."/>
            <person name="Frenck J."/>
            <person name="Mason R.W."/>
        </authorList>
    </citation>
    <scope>NUCLEOTIDE SEQUENCE</scope>
    <scope>TISSUE SPECIFICITY</scope>
    <scope>DEVELOPMENTAL STAGE</scope>
    <scope>VARIANT SER-272</scope>
    <source>
        <strain>C57BL/6J</strain>
        <tissue>Placenta</tissue>
    </source>
</reference>
<reference key="2">
    <citation type="journal article" date="2002" name="Genomics">
        <title>Identification and characterization of a dense cluster of placenta-specific cysteine peptidase genes and related genes on mouse chromosome 13.</title>
        <authorList>
            <person name="Deussing J."/>
            <person name="Kouadio M."/>
            <person name="Rehman S."/>
            <person name="Werber I."/>
            <person name="Schwinde A."/>
            <person name="Peters C."/>
        </authorList>
    </citation>
    <scope>NUCLEOTIDE SEQUENCE</scope>
    <source>
        <strain>129/Sv</strain>
        <strain>C57BL/6J</strain>
        <tissue>Placenta</tissue>
        <tissue>Spleen</tissue>
    </source>
</reference>
<reference key="3">
    <citation type="journal article" date="2005" name="Science">
        <title>The transcriptional landscape of the mammalian genome.</title>
        <authorList>
            <person name="Carninci P."/>
            <person name="Kasukawa T."/>
            <person name="Katayama S."/>
            <person name="Gough J."/>
            <person name="Frith M.C."/>
            <person name="Maeda N."/>
            <person name="Oyama R."/>
            <person name="Ravasi T."/>
            <person name="Lenhard B."/>
            <person name="Wells C."/>
            <person name="Kodzius R."/>
            <person name="Shimokawa K."/>
            <person name="Bajic V.B."/>
            <person name="Brenner S.E."/>
            <person name="Batalov S."/>
            <person name="Forrest A.R."/>
            <person name="Zavolan M."/>
            <person name="Davis M.J."/>
            <person name="Wilming L.G."/>
            <person name="Aidinis V."/>
            <person name="Allen J.E."/>
            <person name="Ambesi-Impiombato A."/>
            <person name="Apweiler R."/>
            <person name="Aturaliya R.N."/>
            <person name="Bailey T.L."/>
            <person name="Bansal M."/>
            <person name="Baxter L."/>
            <person name="Beisel K.W."/>
            <person name="Bersano T."/>
            <person name="Bono H."/>
            <person name="Chalk A.M."/>
            <person name="Chiu K.P."/>
            <person name="Choudhary V."/>
            <person name="Christoffels A."/>
            <person name="Clutterbuck D.R."/>
            <person name="Crowe M.L."/>
            <person name="Dalla E."/>
            <person name="Dalrymple B.P."/>
            <person name="de Bono B."/>
            <person name="Della Gatta G."/>
            <person name="di Bernardo D."/>
            <person name="Down T."/>
            <person name="Engstrom P."/>
            <person name="Fagiolini M."/>
            <person name="Faulkner G."/>
            <person name="Fletcher C.F."/>
            <person name="Fukushima T."/>
            <person name="Furuno M."/>
            <person name="Futaki S."/>
            <person name="Gariboldi M."/>
            <person name="Georgii-Hemming P."/>
            <person name="Gingeras T.R."/>
            <person name="Gojobori T."/>
            <person name="Green R.E."/>
            <person name="Gustincich S."/>
            <person name="Harbers M."/>
            <person name="Hayashi Y."/>
            <person name="Hensch T.K."/>
            <person name="Hirokawa N."/>
            <person name="Hill D."/>
            <person name="Huminiecki L."/>
            <person name="Iacono M."/>
            <person name="Ikeo K."/>
            <person name="Iwama A."/>
            <person name="Ishikawa T."/>
            <person name="Jakt M."/>
            <person name="Kanapin A."/>
            <person name="Katoh M."/>
            <person name="Kawasawa Y."/>
            <person name="Kelso J."/>
            <person name="Kitamura H."/>
            <person name="Kitano H."/>
            <person name="Kollias G."/>
            <person name="Krishnan S.P."/>
            <person name="Kruger A."/>
            <person name="Kummerfeld S.K."/>
            <person name="Kurochkin I.V."/>
            <person name="Lareau L.F."/>
            <person name="Lazarevic D."/>
            <person name="Lipovich L."/>
            <person name="Liu J."/>
            <person name="Liuni S."/>
            <person name="McWilliam S."/>
            <person name="Madan Babu M."/>
            <person name="Madera M."/>
            <person name="Marchionni L."/>
            <person name="Matsuda H."/>
            <person name="Matsuzawa S."/>
            <person name="Miki H."/>
            <person name="Mignone F."/>
            <person name="Miyake S."/>
            <person name="Morris K."/>
            <person name="Mottagui-Tabar S."/>
            <person name="Mulder N."/>
            <person name="Nakano N."/>
            <person name="Nakauchi H."/>
            <person name="Ng P."/>
            <person name="Nilsson R."/>
            <person name="Nishiguchi S."/>
            <person name="Nishikawa S."/>
            <person name="Nori F."/>
            <person name="Ohara O."/>
            <person name="Okazaki Y."/>
            <person name="Orlando V."/>
            <person name="Pang K.C."/>
            <person name="Pavan W.J."/>
            <person name="Pavesi G."/>
            <person name="Pesole G."/>
            <person name="Petrovsky N."/>
            <person name="Piazza S."/>
            <person name="Reed J."/>
            <person name="Reid J.F."/>
            <person name="Ring B.Z."/>
            <person name="Ringwald M."/>
            <person name="Rost B."/>
            <person name="Ruan Y."/>
            <person name="Salzberg S.L."/>
            <person name="Sandelin A."/>
            <person name="Schneider C."/>
            <person name="Schoenbach C."/>
            <person name="Sekiguchi K."/>
            <person name="Semple C.A."/>
            <person name="Seno S."/>
            <person name="Sessa L."/>
            <person name="Sheng Y."/>
            <person name="Shibata Y."/>
            <person name="Shimada H."/>
            <person name="Shimada K."/>
            <person name="Silva D."/>
            <person name="Sinclair B."/>
            <person name="Sperling S."/>
            <person name="Stupka E."/>
            <person name="Sugiura K."/>
            <person name="Sultana R."/>
            <person name="Takenaka Y."/>
            <person name="Taki K."/>
            <person name="Tammoja K."/>
            <person name="Tan S.L."/>
            <person name="Tang S."/>
            <person name="Taylor M.S."/>
            <person name="Tegner J."/>
            <person name="Teichmann S.A."/>
            <person name="Ueda H.R."/>
            <person name="van Nimwegen E."/>
            <person name="Verardo R."/>
            <person name="Wei C.L."/>
            <person name="Yagi K."/>
            <person name="Yamanishi H."/>
            <person name="Zabarovsky E."/>
            <person name="Zhu S."/>
            <person name="Zimmer A."/>
            <person name="Hide W."/>
            <person name="Bult C."/>
            <person name="Grimmond S.M."/>
            <person name="Teasdale R.D."/>
            <person name="Liu E.T."/>
            <person name="Brusic V."/>
            <person name="Quackenbush J."/>
            <person name="Wahlestedt C."/>
            <person name="Mattick J.S."/>
            <person name="Hume D.A."/>
            <person name="Kai C."/>
            <person name="Sasaki D."/>
            <person name="Tomaru Y."/>
            <person name="Fukuda S."/>
            <person name="Kanamori-Katayama M."/>
            <person name="Suzuki M."/>
            <person name="Aoki J."/>
            <person name="Arakawa T."/>
            <person name="Iida J."/>
            <person name="Imamura K."/>
            <person name="Itoh M."/>
            <person name="Kato T."/>
            <person name="Kawaji H."/>
            <person name="Kawagashira N."/>
            <person name="Kawashima T."/>
            <person name="Kojima M."/>
            <person name="Kondo S."/>
            <person name="Konno H."/>
            <person name="Nakano K."/>
            <person name="Ninomiya N."/>
            <person name="Nishio T."/>
            <person name="Okada M."/>
            <person name="Plessy C."/>
            <person name="Shibata K."/>
            <person name="Shiraki T."/>
            <person name="Suzuki S."/>
            <person name="Tagami M."/>
            <person name="Waki K."/>
            <person name="Watahiki A."/>
            <person name="Okamura-Oho Y."/>
            <person name="Suzuki H."/>
            <person name="Kawai J."/>
            <person name="Hayashizaki Y."/>
        </authorList>
    </citation>
    <scope>NUCLEOTIDE SEQUENCE [LARGE SCALE MRNA]</scope>
    <source>
        <strain>C57BL/6J</strain>
        <tissue>Placenta</tissue>
    </source>
</reference>
<sequence>MTSAIFLAMLCLGMALPSPAPDPILDVEWQKWKIKYGKAYSLEEEGQKRAVWEDNMKKIKLHNGENGLGKHGFTMEMNAFGDMTLEEFRKVMIEIPVPTVKKGKSVQKRLSVNLPKFINWKKRGYVTPVQTQGRCNSCWAFSVTGAIEGQMFRKTGQLIPLSVQNLVDCSRPQGNWGCYLGNTYLALHYVMENGGLESEATYPYEEKDGSCRYSPENSTANITGFEFVPKNEDALMNAVASIGPISVAIDARHASFLFYKRGIYYEPNCSSCVVTHSMLLVGYGFTGRESDGRKYWLVKNSMGTQWGNKGYMKISRDKGNHCGIATYALYPRV</sequence>
<keyword id="KW-1015">Disulfide bond</keyword>
<keyword id="KW-0325">Glycoprotein</keyword>
<keyword id="KW-0378">Hydrolase</keyword>
<keyword id="KW-0458">Lysosome</keyword>
<keyword id="KW-0645">Protease</keyword>
<keyword id="KW-1185">Reference proteome</keyword>
<keyword id="KW-0732">Signal</keyword>
<keyword id="KW-0788">Thiol protease</keyword>
<keyword id="KW-0865">Zymogen</keyword>
<proteinExistence type="evidence at transcript level"/>
<protein>
    <recommendedName>
        <fullName>Cathepsin M</fullName>
        <ecNumber>3.4.22.-</ecNumber>
    </recommendedName>
</protein>
<accession>Q9JL96</accession>
<accession>Q91Z75</accession>
<accession>Q91ZF3</accession>
<accession>Q9CQB9</accession>
<name>CATM_MOUSE</name>
<gene>
    <name type="primary">Ctsm</name>
    <name type="synonym">Catm</name>
</gene>